<comment type="function">
    <text evidence="1">Binds phosphatidylcholine, phosphatidylinositol, polychlorinated biphenyls (PCB) and weakly progesterone, potent inhibitor of phospholipase A2.</text>
</comment>
<comment type="subunit">
    <text evidence="2">Antiparallel homodimer; disulfide-linked (By similarity). Interaction with LMBR1L is controversial (By similarity).</text>
</comment>
<comment type="subcellular location">
    <subcellularLocation>
        <location>Secreted</location>
    </subcellularLocation>
</comment>
<comment type="similarity">
    <text evidence="4">Belongs to the secretoglobin family.</text>
</comment>
<name>UTER_NEOAS</name>
<feature type="signal peptide" evidence="3">
    <location>
        <begin position="1"/>
        <end position="17"/>
    </location>
</feature>
<feature type="chain" id="PRO_0000223335" description="Uteroglobin">
    <location>
        <begin position="18"/>
        <end position="93"/>
    </location>
</feature>
<feature type="disulfide bond" description="Interchain (with C-87)" evidence="1">
    <location>
        <position position="21"/>
    </location>
</feature>
<feature type="disulfide bond" description="Interchain (with C-21)" evidence="1">
    <location>
        <position position="87"/>
    </location>
</feature>
<accession>Q65C83</accession>
<keyword id="KW-1015">Disulfide bond</keyword>
<keyword id="KW-0593">Phospholipase A2 inhibitor</keyword>
<keyword id="KW-0964">Secreted</keyword>
<keyword id="KW-0732">Signal</keyword>
<organism>
    <name type="scientific">Neotomodon alstoni</name>
    <name type="common">Mexican volcano mouse</name>
    <name type="synonym">Peromyscus alstoni</name>
    <dbReference type="NCBI Taxonomy" id="230081"/>
    <lineage>
        <taxon>Eukaryota</taxon>
        <taxon>Metazoa</taxon>
        <taxon>Chordata</taxon>
        <taxon>Craniata</taxon>
        <taxon>Vertebrata</taxon>
        <taxon>Euteleostomi</taxon>
        <taxon>Mammalia</taxon>
        <taxon>Eutheria</taxon>
        <taxon>Euarchontoglires</taxon>
        <taxon>Glires</taxon>
        <taxon>Rodentia</taxon>
        <taxon>Myomorpha</taxon>
        <taxon>Muroidea</taxon>
        <taxon>Cricetidae</taxon>
        <taxon>Neotominae</taxon>
        <taxon>Neotomodon</taxon>
    </lineage>
</organism>
<dbReference type="EMBL" id="AJ583234">
    <property type="protein sequence ID" value="CAE47419.1"/>
    <property type="molecule type" value="mRNA"/>
</dbReference>
<dbReference type="SMR" id="Q65C83"/>
<dbReference type="GO" id="GO:0005737">
    <property type="term" value="C:cytoplasm"/>
    <property type="evidence" value="ECO:0007669"/>
    <property type="project" value="TreeGrafter"/>
</dbReference>
<dbReference type="GO" id="GO:0005615">
    <property type="term" value="C:extracellular space"/>
    <property type="evidence" value="ECO:0007669"/>
    <property type="project" value="TreeGrafter"/>
</dbReference>
<dbReference type="GO" id="GO:0019834">
    <property type="term" value="F:phospholipase A2 inhibitor activity"/>
    <property type="evidence" value="ECO:0007669"/>
    <property type="project" value="UniProtKB-KW"/>
</dbReference>
<dbReference type="GO" id="GO:0007165">
    <property type="term" value="P:signal transduction"/>
    <property type="evidence" value="ECO:0007669"/>
    <property type="project" value="InterPro"/>
</dbReference>
<dbReference type="CDD" id="cd00633">
    <property type="entry name" value="Secretoglobin"/>
    <property type="match status" value="1"/>
</dbReference>
<dbReference type="FunFam" id="1.10.210.10:FF:000001">
    <property type="entry name" value="Uteroglobin"/>
    <property type="match status" value="1"/>
</dbReference>
<dbReference type="Gene3D" id="1.10.210.10">
    <property type="entry name" value="Secretoglobin"/>
    <property type="match status" value="1"/>
</dbReference>
<dbReference type="InterPro" id="IPR016126">
    <property type="entry name" value="Secretoglobin"/>
</dbReference>
<dbReference type="InterPro" id="IPR043215">
    <property type="entry name" value="Secretoglobin_1C-like"/>
</dbReference>
<dbReference type="InterPro" id="IPR035960">
    <property type="entry name" value="Secretoglobin_sf"/>
</dbReference>
<dbReference type="InterPro" id="IPR000329">
    <property type="entry name" value="Uteroglobin"/>
</dbReference>
<dbReference type="PANTHER" id="PTHR10136">
    <property type="entry name" value="SECRETOGLOBIN FAMILY 1 MEMBER"/>
    <property type="match status" value="1"/>
</dbReference>
<dbReference type="PANTHER" id="PTHR10136:SF6">
    <property type="entry name" value="UTEROGLOBIN"/>
    <property type="match status" value="1"/>
</dbReference>
<dbReference type="Pfam" id="PF01099">
    <property type="entry name" value="Uteroglobin"/>
    <property type="match status" value="1"/>
</dbReference>
<dbReference type="PRINTS" id="PR00486">
    <property type="entry name" value="UTEROGLOBIN"/>
</dbReference>
<dbReference type="SMART" id="SM00096">
    <property type="entry name" value="UTG"/>
    <property type="match status" value="1"/>
</dbReference>
<dbReference type="SUPFAM" id="SSF48201">
    <property type="entry name" value="Uteroglobin-like"/>
    <property type="match status" value="1"/>
</dbReference>
<dbReference type="PROSITE" id="PS51311">
    <property type="entry name" value="SCGB"/>
    <property type="match status" value="1"/>
</dbReference>
<sequence>MKLAITIILVMLSVCYSSDTCPGFLQVLEYLFMGSESTYEAALKFYNPGSDLQNSGMQLKKLVDTLPEKTRVNIVKLSEIILTSNLCNQDPSF</sequence>
<proteinExistence type="inferred from homology"/>
<reference key="1">
    <citation type="submission" date="2003-09" db="EMBL/GenBank/DDBJ databases">
        <title>cDNA sequence and tissue specific expression, 5'-flanking gene region and promoter activity of the Neotomodon clara cell secretory protein.</title>
        <authorList>
            <person name="Macias H.G."/>
            <person name="Pasapera A.M."/>
            <person name="Perez-Solis M.A."/>
            <person name="Ulloa-Aguirre A."/>
            <person name="Gutierrez-Sagal R."/>
        </authorList>
    </citation>
    <scope>NUCLEOTIDE SEQUENCE [MRNA]</scope>
    <source>
        <tissue>Lung</tissue>
    </source>
</reference>
<gene>
    <name type="primary">SCGB1A1</name>
    <name type="synonym">CCSP</name>
</gene>
<protein>
    <recommendedName>
        <fullName>Uteroglobin</fullName>
    </recommendedName>
    <alternativeName>
        <fullName>Club cell secretory protein</fullName>
    </alternativeName>
    <alternativeName>
        <fullName>Secretoglobin family 1A member 1</fullName>
    </alternativeName>
</protein>
<evidence type="ECO:0000250" key="1"/>
<evidence type="ECO:0000250" key="2">
    <source>
        <dbReference type="UniProtKB" id="P11684"/>
    </source>
</evidence>
<evidence type="ECO:0000255" key="3"/>
<evidence type="ECO:0000305" key="4"/>